<accession>A9M5Q0</accession>
<proteinExistence type="inferred from homology"/>
<dbReference type="EMBL" id="CP000872">
    <property type="protein sequence ID" value="ABX62305.1"/>
    <property type="molecule type" value="Genomic_DNA"/>
</dbReference>
<dbReference type="RefSeq" id="WP_004688461.1">
    <property type="nucleotide sequence ID" value="NC_010103.1"/>
</dbReference>
<dbReference type="SMR" id="A9M5Q0"/>
<dbReference type="GeneID" id="55590908"/>
<dbReference type="KEGG" id="bcs:BCAN_A1256"/>
<dbReference type="HOGENOM" id="CLU_044142_2_0_5"/>
<dbReference type="Proteomes" id="UP000001385">
    <property type="component" value="Chromosome I"/>
</dbReference>
<dbReference type="GO" id="GO:0022625">
    <property type="term" value="C:cytosolic large ribosomal subunit"/>
    <property type="evidence" value="ECO:0007669"/>
    <property type="project" value="TreeGrafter"/>
</dbReference>
<dbReference type="GO" id="GO:0019843">
    <property type="term" value="F:rRNA binding"/>
    <property type="evidence" value="ECO:0007669"/>
    <property type="project" value="UniProtKB-UniRule"/>
</dbReference>
<dbReference type="GO" id="GO:0003735">
    <property type="term" value="F:structural constituent of ribosome"/>
    <property type="evidence" value="ECO:0007669"/>
    <property type="project" value="InterPro"/>
</dbReference>
<dbReference type="GO" id="GO:0006412">
    <property type="term" value="P:translation"/>
    <property type="evidence" value="ECO:0007669"/>
    <property type="project" value="UniProtKB-UniRule"/>
</dbReference>
<dbReference type="FunFam" id="2.40.30.10:FF:000004">
    <property type="entry name" value="50S ribosomal protein L3"/>
    <property type="match status" value="1"/>
</dbReference>
<dbReference type="FunFam" id="3.30.160.810:FF:000001">
    <property type="entry name" value="50S ribosomal protein L3"/>
    <property type="match status" value="1"/>
</dbReference>
<dbReference type="Gene3D" id="3.30.160.810">
    <property type="match status" value="1"/>
</dbReference>
<dbReference type="Gene3D" id="2.40.30.10">
    <property type="entry name" value="Translation factors"/>
    <property type="match status" value="1"/>
</dbReference>
<dbReference type="HAMAP" id="MF_01325_B">
    <property type="entry name" value="Ribosomal_uL3_B"/>
    <property type="match status" value="1"/>
</dbReference>
<dbReference type="InterPro" id="IPR000597">
    <property type="entry name" value="Ribosomal_uL3"/>
</dbReference>
<dbReference type="InterPro" id="IPR019927">
    <property type="entry name" value="Ribosomal_uL3_bac/org-type"/>
</dbReference>
<dbReference type="InterPro" id="IPR019926">
    <property type="entry name" value="Ribosomal_uL3_CS"/>
</dbReference>
<dbReference type="InterPro" id="IPR009000">
    <property type="entry name" value="Transl_B-barrel_sf"/>
</dbReference>
<dbReference type="NCBIfam" id="TIGR03625">
    <property type="entry name" value="L3_bact"/>
    <property type="match status" value="1"/>
</dbReference>
<dbReference type="PANTHER" id="PTHR11229">
    <property type="entry name" value="50S RIBOSOMAL PROTEIN L3"/>
    <property type="match status" value="1"/>
</dbReference>
<dbReference type="PANTHER" id="PTHR11229:SF16">
    <property type="entry name" value="LARGE RIBOSOMAL SUBUNIT PROTEIN UL3C"/>
    <property type="match status" value="1"/>
</dbReference>
<dbReference type="Pfam" id="PF00297">
    <property type="entry name" value="Ribosomal_L3"/>
    <property type="match status" value="1"/>
</dbReference>
<dbReference type="SUPFAM" id="SSF50447">
    <property type="entry name" value="Translation proteins"/>
    <property type="match status" value="1"/>
</dbReference>
<dbReference type="PROSITE" id="PS00474">
    <property type="entry name" value="RIBOSOMAL_L3"/>
    <property type="match status" value="1"/>
</dbReference>
<feature type="chain" id="PRO_1000086428" description="Large ribosomal subunit protein uL3">
    <location>
        <begin position="1"/>
        <end position="237"/>
    </location>
</feature>
<feature type="region of interest" description="Disordered" evidence="2">
    <location>
        <begin position="133"/>
        <end position="155"/>
    </location>
</feature>
<feature type="region of interest" description="Disordered" evidence="2">
    <location>
        <begin position="213"/>
        <end position="237"/>
    </location>
</feature>
<feature type="compositionally biased region" description="Polar residues" evidence="2">
    <location>
        <begin position="135"/>
        <end position="150"/>
    </location>
</feature>
<feature type="compositionally biased region" description="Low complexity" evidence="2">
    <location>
        <begin position="220"/>
        <end position="237"/>
    </location>
</feature>
<feature type="modified residue" description="N5-methylglutamine" evidence="1">
    <location>
        <position position="151"/>
    </location>
</feature>
<evidence type="ECO:0000255" key="1">
    <source>
        <dbReference type="HAMAP-Rule" id="MF_01325"/>
    </source>
</evidence>
<evidence type="ECO:0000256" key="2">
    <source>
        <dbReference type="SAM" id="MobiDB-lite"/>
    </source>
</evidence>
<evidence type="ECO:0000305" key="3"/>
<reference key="1">
    <citation type="submission" date="2007-10" db="EMBL/GenBank/DDBJ databases">
        <title>Brucella canis ATCC 23365 whole genome shotgun sequencing project.</title>
        <authorList>
            <person name="Setubal J.C."/>
            <person name="Bowns C."/>
            <person name="Boyle S."/>
            <person name="Crasta O.R."/>
            <person name="Czar M.J."/>
            <person name="Dharmanolla C."/>
            <person name="Gillespie J.J."/>
            <person name="Kenyon R.W."/>
            <person name="Lu J."/>
            <person name="Mane S."/>
            <person name="Mohapatra S."/>
            <person name="Nagrani S."/>
            <person name="Purkayastha A."/>
            <person name="Rajasimha H.K."/>
            <person name="Shallom J.M."/>
            <person name="Shallom S."/>
            <person name="Shukla M."/>
            <person name="Snyder E.E."/>
            <person name="Sobral B.W."/>
            <person name="Wattam A.R."/>
            <person name="Will R."/>
            <person name="Williams K."/>
            <person name="Yoo H."/>
            <person name="Bruce D."/>
            <person name="Detter C."/>
            <person name="Munk C."/>
            <person name="Brettin T.S."/>
        </authorList>
    </citation>
    <scope>NUCLEOTIDE SEQUENCE [LARGE SCALE GENOMIC DNA]</scope>
    <source>
        <strain>ATCC 23365 / NCTC 10854 / RM-666</strain>
    </source>
</reference>
<comment type="function">
    <text evidence="1">One of the primary rRNA binding proteins, it binds directly near the 3'-end of the 23S rRNA, where it nucleates assembly of the 50S subunit.</text>
</comment>
<comment type="subunit">
    <text evidence="1">Part of the 50S ribosomal subunit. Forms a cluster with proteins L14 and L19.</text>
</comment>
<comment type="PTM">
    <text evidence="1">Methylated by PrmB.</text>
</comment>
<comment type="similarity">
    <text evidence="1">Belongs to the universal ribosomal protein uL3 family.</text>
</comment>
<keyword id="KW-0488">Methylation</keyword>
<keyword id="KW-1185">Reference proteome</keyword>
<keyword id="KW-0687">Ribonucleoprotein</keyword>
<keyword id="KW-0689">Ribosomal protein</keyword>
<keyword id="KW-0694">RNA-binding</keyword>
<keyword id="KW-0699">rRNA-binding</keyword>
<name>RL3_BRUC2</name>
<organism>
    <name type="scientific">Brucella canis (strain ATCC 23365 / NCTC 10854 / RM-666)</name>
    <dbReference type="NCBI Taxonomy" id="483179"/>
    <lineage>
        <taxon>Bacteria</taxon>
        <taxon>Pseudomonadati</taxon>
        <taxon>Pseudomonadota</taxon>
        <taxon>Alphaproteobacteria</taxon>
        <taxon>Hyphomicrobiales</taxon>
        <taxon>Brucellaceae</taxon>
        <taxon>Brucella/Ochrobactrum group</taxon>
        <taxon>Brucella</taxon>
    </lineage>
</organism>
<sequence>MRSGVIAQKLGMTRVYNDAGEHVPVTVLRMENCHVVAQRTVEKNGYTAVQLGVGMAKVKNTSKAMRGHFAKAEVEPKAKLAEFRVSPDNLLEVGVEITAEHFVAGQKVDVTGTSIGKGFAGVMKRHNFGGHRASHGNSITHRSHGSTGQRQDPGKVFKGKKMAGHMGQTRVTTQNIEVVSTDSDRGLILVRGAVPGSKGAWILVRDAVKASLPENAPKPAGLRAGAKAEAAATEGAE</sequence>
<gene>
    <name evidence="1" type="primary">rplC</name>
    <name type="ordered locus">BCAN_A1256</name>
</gene>
<protein>
    <recommendedName>
        <fullName evidence="1">Large ribosomal subunit protein uL3</fullName>
    </recommendedName>
    <alternativeName>
        <fullName evidence="3">50S ribosomal protein L3</fullName>
    </alternativeName>
</protein>